<comment type="function">
    <text evidence="1">Essential cell division protein that stabilizes the FtsZ protofilaments by cross-linking them and that serves as a cytoplasmic membrane anchor for the Z ring. Also required for the recruitment to the septal ring of downstream cell division proteins.</text>
</comment>
<comment type="subunit">
    <text evidence="1">Interacts with FtsZ via their C-terminal domains.</text>
</comment>
<comment type="subcellular location">
    <subcellularLocation>
        <location evidence="1">Cell inner membrane</location>
        <topology evidence="1">Single-pass type I membrane protein</topology>
    </subcellularLocation>
    <text evidence="1">Localizes to the Z ring in an FtsZ-dependent manner.</text>
</comment>
<comment type="similarity">
    <text evidence="1">Belongs to the ZipA family.</text>
</comment>
<keyword id="KW-0131">Cell cycle</keyword>
<keyword id="KW-0132">Cell division</keyword>
<keyword id="KW-0997">Cell inner membrane</keyword>
<keyword id="KW-1003">Cell membrane</keyword>
<keyword id="KW-0472">Membrane</keyword>
<keyword id="KW-0812">Transmembrane</keyword>
<keyword id="KW-1133">Transmembrane helix</keyword>
<organism>
    <name type="scientific">Actinobacillus pleuropneumoniae serotype 7 (strain AP76)</name>
    <dbReference type="NCBI Taxonomy" id="537457"/>
    <lineage>
        <taxon>Bacteria</taxon>
        <taxon>Pseudomonadati</taxon>
        <taxon>Pseudomonadota</taxon>
        <taxon>Gammaproteobacteria</taxon>
        <taxon>Pasteurellales</taxon>
        <taxon>Pasteurellaceae</taxon>
        <taxon>Actinobacillus</taxon>
    </lineage>
</organism>
<sequence length="336" mass="37436">MELHILFFILAGLLIAVLIGFSLWSARREKSRIFSNTFSTRPPSTPINNIVSDVPPSLNPQSYAQTTGQHGETEADNPVQIQQEVESSLREIKINLPGQDSAAYQSKVEETPIYSGQPVLPVQPQYQTQVQYQTQPQHIEPAFTQAPQSPIAEATSVLEQSVEELERQAAQGDVDIYSDASVRVELAKNSMQADSVAEQKPVAENNMITLYVVAPEGQQFRGDYVVQSLEALGFQYGEYQIFHRHQHMGNSASPVIFSVANMMQPGIFDLTKIEHFSTVGLVLFMHLPSEGNDVVNFKLLLKTTENLAQALGGFVLNEHREIFDENSRQSYLARVS</sequence>
<dbReference type="EMBL" id="CP001091">
    <property type="protein sequence ID" value="ACE62006.1"/>
    <property type="molecule type" value="Genomic_DNA"/>
</dbReference>
<dbReference type="RefSeq" id="WP_005617784.1">
    <property type="nucleotide sequence ID" value="NC_010939.1"/>
</dbReference>
<dbReference type="SMR" id="B3H276"/>
<dbReference type="KEGG" id="apa:APP7_1354"/>
<dbReference type="HOGENOM" id="CLU_030174_1_0_6"/>
<dbReference type="Proteomes" id="UP000001226">
    <property type="component" value="Chromosome"/>
</dbReference>
<dbReference type="GO" id="GO:0032153">
    <property type="term" value="C:cell division site"/>
    <property type="evidence" value="ECO:0007669"/>
    <property type="project" value="UniProtKB-UniRule"/>
</dbReference>
<dbReference type="GO" id="GO:0005886">
    <property type="term" value="C:plasma membrane"/>
    <property type="evidence" value="ECO:0007669"/>
    <property type="project" value="UniProtKB-SubCell"/>
</dbReference>
<dbReference type="GO" id="GO:0000917">
    <property type="term" value="P:division septum assembly"/>
    <property type="evidence" value="ECO:0007669"/>
    <property type="project" value="TreeGrafter"/>
</dbReference>
<dbReference type="GO" id="GO:0043093">
    <property type="term" value="P:FtsZ-dependent cytokinesis"/>
    <property type="evidence" value="ECO:0007669"/>
    <property type="project" value="UniProtKB-UniRule"/>
</dbReference>
<dbReference type="Gene3D" id="3.30.1400.10">
    <property type="entry name" value="ZipA, C-terminal FtsZ-binding domain"/>
    <property type="match status" value="1"/>
</dbReference>
<dbReference type="HAMAP" id="MF_00509">
    <property type="entry name" value="ZipA"/>
    <property type="match status" value="1"/>
</dbReference>
<dbReference type="InterPro" id="IPR011919">
    <property type="entry name" value="Cell_div_ZipA"/>
</dbReference>
<dbReference type="InterPro" id="IPR007449">
    <property type="entry name" value="ZipA_FtsZ-bd_C"/>
</dbReference>
<dbReference type="InterPro" id="IPR036765">
    <property type="entry name" value="ZipA_FtsZ-bd_C_sf"/>
</dbReference>
<dbReference type="NCBIfam" id="TIGR02205">
    <property type="entry name" value="septum_zipA"/>
    <property type="match status" value="1"/>
</dbReference>
<dbReference type="PANTHER" id="PTHR38685">
    <property type="entry name" value="CELL DIVISION PROTEIN ZIPA"/>
    <property type="match status" value="1"/>
</dbReference>
<dbReference type="PANTHER" id="PTHR38685:SF1">
    <property type="entry name" value="CELL DIVISION PROTEIN ZIPA"/>
    <property type="match status" value="1"/>
</dbReference>
<dbReference type="Pfam" id="PF04354">
    <property type="entry name" value="ZipA_C"/>
    <property type="match status" value="1"/>
</dbReference>
<dbReference type="SMART" id="SM00771">
    <property type="entry name" value="ZipA_C"/>
    <property type="match status" value="1"/>
</dbReference>
<dbReference type="SUPFAM" id="SSF64383">
    <property type="entry name" value="Cell-division protein ZipA, C-terminal domain"/>
    <property type="match status" value="1"/>
</dbReference>
<proteinExistence type="inferred from homology"/>
<accession>B3H276</accession>
<evidence type="ECO:0000255" key="1">
    <source>
        <dbReference type="HAMAP-Rule" id="MF_00509"/>
    </source>
</evidence>
<evidence type="ECO:0000256" key="2">
    <source>
        <dbReference type="SAM" id="MobiDB-lite"/>
    </source>
</evidence>
<name>ZIPA_ACTP7</name>
<feature type="chain" id="PRO_1000127212" description="Cell division protein ZipA">
    <location>
        <begin position="1"/>
        <end position="336"/>
    </location>
</feature>
<feature type="topological domain" description="Periplasmic" evidence="1">
    <location>
        <begin position="1"/>
        <end position="2"/>
    </location>
</feature>
<feature type="transmembrane region" description="Helical" evidence="1">
    <location>
        <begin position="3"/>
        <end position="23"/>
    </location>
</feature>
<feature type="topological domain" description="Cytoplasmic" evidence="1">
    <location>
        <begin position="24"/>
        <end position="336"/>
    </location>
</feature>
<feature type="region of interest" description="Disordered" evidence="2">
    <location>
        <begin position="57"/>
        <end position="76"/>
    </location>
</feature>
<feature type="compositionally biased region" description="Polar residues" evidence="2">
    <location>
        <begin position="59"/>
        <end position="70"/>
    </location>
</feature>
<protein>
    <recommendedName>
        <fullName evidence="1">Cell division protein ZipA</fullName>
    </recommendedName>
</protein>
<reference key="1">
    <citation type="submission" date="2008-06" db="EMBL/GenBank/DDBJ databases">
        <title>Genome and proteome analysis of A. pleuropneumoniae serotype 7.</title>
        <authorList>
            <person name="Linke B."/>
            <person name="Buettner F."/>
            <person name="Martinez-Arias R."/>
            <person name="Goesmann A."/>
            <person name="Baltes N."/>
            <person name="Tegetmeyer H."/>
            <person name="Singh M."/>
            <person name="Gerlach G.F."/>
        </authorList>
    </citation>
    <scope>NUCLEOTIDE SEQUENCE [LARGE SCALE GENOMIC DNA]</scope>
    <source>
        <strain>AP76</strain>
    </source>
</reference>
<gene>
    <name evidence="1" type="primary">zipA</name>
    <name type="ordered locus">APP7_1354</name>
</gene>